<keyword id="KW-0007">Acetylation</keyword>
<keyword id="KW-0489">Methyltransferase</keyword>
<keyword id="KW-0539">Nucleus</keyword>
<keyword id="KW-1185">Reference proteome</keyword>
<keyword id="KW-0949">S-adenosyl-L-methionine</keyword>
<keyword id="KW-0808">Transferase</keyword>
<keyword id="KW-0819">tRNA processing</keyword>
<evidence type="ECO:0000250" key="1">
    <source>
        <dbReference type="UniProtKB" id="P46959"/>
    </source>
</evidence>
<evidence type="ECO:0000250" key="2">
    <source>
        <dbReference type="UniProtKB" id="Q96FX7"/>
    </source>
</evidence>
<evidence type="ECO:0000255" key="3">
    <source>
        <dbReference type="PROSITE-ProRule" id="PRU00952"/>
    </source>
</evidence>
<protein>
    <recommendedName>
        <fullName>tRNA (adenine(58)-N(1))-methyltransferase catalytic subunit TRMT61A</fullName>
        <ecNumber evidence="2">2.1.1.220</ecNumber>
    </recommendedName>
    <alternativeName>
        <fullName>mRNA methyladenosine-N(1)-methyltransferase catalytic subunit TRMT61A</fullName>
        <ecNumber evidence="2">2.1.1.-</ecNumber>
    </alternativeName>
    <alternativeName>
        <fullName>tRNA(m1A58)-methyltransferase subunit TRMT61A</fullName>
        <shortName>tRNA(m1A58)MTase subunit TRMT61A</shortName>
    </alternativeName>
</protein>
<feature type="initiator methionine" description="Removed" evidence="2">
    <location>
        <position position="1"/>
    </location>
</feature>
<feature type="chain" id="PRO_0000233096" description="tRNA (adenine(58)-N(1))-methyltransferase catalytic subunit TRMT61A">
    <location>
        <begin position="2"/>
        <end position="290"/>
    </location>
</feature>
<feature type="region of interest" description="Substrate" evidence="2">
    <location>
        <begin position="20"/>
        <end position="22"/>
    </location>
</feature>
<feature type="region of interest" description="Substrate" evidence="2">
    <location>
        <begin position="35"/>
        <end position="42"/>
    </location>
</feature>
<feature type="region of interest" description="Substrate" evidence="2">
    <location>
        <begin position="64"/>
        <end position="65"/>
    </location>
</feature>
<feature type="region of interest" description="Substrate" evidence="2">
    <location>
        <begin position="85"/>
        <end position="89"/>
    </location>
</feature>
<feature type="region of interest" description="Substrate" evidence="2">
    <location>
        <begin position="110"/>
        <end position="117"/>
    </location>
</feature>
<feature type="region of interest" description="Substrate" evidence="2">
    <location>
        <begin position="180"/>
        <end position="183"/>
    </location>
</feature>
<feature type="region of interest" description="Substrate" evidence="2">
    <location>
        <begin position="205"/>
        <end position="212"/>
    </location>
</feature>
<feature type="binding site" evidence="2">
    <location>
        <position position="87"/>
    </location>
    <ligand>
        <name>S-adenosyl-L-methionine</name>
        <dbReference type="ChEBI" id="CHEBI:59789"/>
    </ligand>
</feature>
<feature type="binding site" evidence="2">
    <location>
        <begin position="114"/>
        <end position="116"/>
    </location>
    <ligand>
        <name>S-adenosyl-L-methionine</name>
        <dbReference type="ChEBI" id="CHEBI:59789"/>
    </ligand>
</feature>
<feature type="binding site" evidence="2 3">
    <location>
        <position position="135"/>
    </location>
    <ligand>
        <name>S-adenosyl-L-methionine</name>
        <dbReference type="ChEBI" id="CHEBI:59789"/>
    </ligand>
</feature>
<feature type="binding site" evidence="2">
    <location>
        <position position="140"/>
    </location>
    <ligand>
        <name>S-adenosyl-L-methionine</name>
        <dbReference type="ChEBI" id="CHEBI:59789"/>
    </ligand>
</feature>
<feature type="binding site" evidence="2">
    <location>
        <begin position="163"/>
        <end position="164"/>
    </location>
    <ligand>
        <name>S-adenosyl-L-methionine</name>
        <dbReference type="ChEBI" id="CHEBI:59789"/>
    </ligand>
</feature>
<feature type="binding site" evidence="2 3">
    <location>
        <position position="181"/>
    </location>
    <ligand>
        <name>S-adenosyl-L-methionine</name>
        <dbReference type="ChEBI" id="CHEBI:59789"/>
    </ligand>
</feature>
<feature type="binding site" evidence="2">
    <location>
        <position position="279"/>
    </location>
    <ligand>
        <name>substrate</name>
    </ligand>
</feature>
<feature type="modified residue" description="N-acetylserine" evidence="2">
    <location>
        <position position="2"/>
    </location>
</feature>
<reference key="1">
    <citation type="journal article" date="2004" name="Genome Res.">
        <title>The status, quality, and expansion of the NIH full-length cDNA project: the Mammalian Gene Collection (MGC).</title>
        <authorList>
            <consortium name="The MGC Project Team"/>
        </authorList>
    </citation>
    <scope>NUCLEOTIDE SEQUENCE [LARGE SCALE MRNA]</scope>
    <source>
        <tissue>Testis</tissue>
    </source>
</reference>
<comment type="function">
    <text evidence="2">Catalytic subunit of tRNA (adenine-N(1)-)-methyltransferase, which catalyzes the formation of N(1)-methyladenine at position 58 (m1A58) in initiator methionyl-tRNA. Catalytic subunit of mRNA N(1)-methyltransferase complex, which mediates methylation of adenosine residues at the N(1) position of a small subset of mRNAs: N(1) methylation takes place in tRNA T-loop-like structures of mRNAs and is only present at low stoichiometries.</text>
</comment>
<comment type="catalytic activity">
    <reaction evidence="3">
        <text>adenosine(58) in tRNA + S-adenosyl-L-methionine = N(1)-methyladenosine(58) in tRNA + S-adenosyl-L-homocysteine + H(+)</text>
        <dbReference type="Rhea" id="RHEA:43152"/>
        <dbReference type="Rhea" id="RHEA-COMP:10365"/>
        <dbReference type="Rhea" id="RHEA-COMP:10366"/>
        <dbReference type="ChEBI" id="CHEBI:15378"/>
        <dbReference type="ChEBI" id="CHEBI:57856"/>
        <dbReference type="ChEBI" id="CHEBI:59789"/>
        <dbReference type="ChEBI" id="CHEBI:74411"/>
        <dbReference type="ChEBI" id="CHEBI:74491"/>
        <dbReference type="EC" id="2.1.1.220"/>
    </reaction>
</comment>
<comment type="catalytic activity">
    <reaction evidence="2">
        <text>an adenosine in mRNA + S-adenosyl-L-methionine = an N(1)-methyladenosine in mRNA + S-adenosyl-L-homocysteine + H(+)</text>
        <dbReference type="Rhea" id="RHEA:55392"/>
        <dbReference type="Rhea" id="RHEA-COMP:12414"/>
        <dbReference type="Rhea" id="RHEA-COMP:12415"/>
        <dbReference type="ChEBI" id="CHEBI:15378"/>
        <dbReference type="ChEBI" id="CHEBI:57856"/>
        <dbReference type="ChEBI" id="CHEBI:59789"/>
        <dbReference type="ChEBI" id="CHEBI:74411"/>
        <dbReference type="ChEBI" id="CHEBI:74491"/>
    </reaction>
</comment>
<comment type="subunit">
    <text evidence="2">Heterotetramer; composed of two copies of TRMT6 and two copies of TRMT61A.</text>
</comment>
<comment type="subcellular location">
    <subcellularLocation>
        <location evidence="1">Nucleus</location>
    </subcellularLocation>
</comment>
<comment type="similarity">
    <text evidence="3">Belongs to the class I-like SAM-binding methyltransferase superfamily. TRM61 family.</text>
</comment>
<dbReference type="EC" id="2.1.1.220" evidence="2"/>
<dbReference type="EC" id="2.1.1.-" evidence="2"/>
<dbReference type="EMBL" id="BC079198">
    <property type="protein sequence ID" value="AAH79198.1"/>
    <property type="molecule type" value="mRNA"/>
</dbReference>
<dbReference type="RefSeq" id="NP_001007707.1">
    <property type="nucleotide sequence ID" value="NM_001007706.1"/>
</dbReference>
<dbReference type="RefSeq" id="NP_001420916.1">
    <property type="nucleotide sequence ID" value="NM_001433987.1"/>
</dbReference>
<dbReference type="RefSeq" id="XP_008763160.1">
    <property type="nucleotide sequence ID" value="XM_008764938.2"/>
</dbReference>
<dbReference type="RefSeq" id="XP_008763197.1">
    <property type="nucleotide sequence ID" value="XM_008764975.2"/>
</dbReference>
<dbReference type="RefSeq" id="XP_008763198.1">
    <property type="nucleotide sequence ID" value="XM_008764976.2"/>
</dbReference>
<dbReference type="RefSeq" id="XP_017458788.1">
    <property type="nucleotide sequence ID" value="XM_017603299.1"/>
</dbReference>
<dbReference type="SMR" id="Q6AY46"/>
<dbReference type="FunCoup" id="Q6AY46">
    <property type="interactions" value="623"/>
</dbReference>
<dbReference type="STRING" id="10116.ENSRNOP00000071623"/>
<dbReference type="PhosphoSitePlus" id="Q6AY46"/>
<dbReference type="jPOST" id="Q6AY46"/>
<dbReference type="PaxDb" id="10116-ENSRNOP00000015308"/>
<dbReference type="Ensembl" id="ENSRNOT00000015308.4">
    <property type="protein sequence ID" value="ENSRNOP00000015308.2"/>
    <property type="gene ID" value="ENSRNOG00000011398.5"/>
</dbReference>
<dbReference type="GeneID" id="314462"/>
<dbReference type="KEGG" id="rno:314462"/>
<dbReference type="UCSC" id="RGD:1359191">
    <property type="organism name" value="rat"/>
</dbReference>
<dbReference type="AGR" id="RGD:1359191"/>
<dbReference type="CTD" id="115708"/>
<dbReference type="RGD" id="1359191">
    <property type="gene designation" value="Trmt61a"/>
</dbReference>
<dbReference type="eggNOG" id="KOG2915">
    <property type="taxonomic scope" value="Eukaryota"/>
</dbReference>
<dbReference type="GeneTree" id="ENSGT00940000154239"/>
<dbReference type="InParanoid" id="Q6AY46"/>
<dbReference type="OMA" id="RPDHRMI"/>
<dbReference type="OrthoDB" id="1925287at2759"/>
<dbReference type="PhylomeDB" id="Q6AY46"/>
<dbReference type="TreeFam" id="TF315053"/>
<dbReference type="PRO" id="PR:Q6AY46"/>
<dbReference type="Proteomes" id="UP000002494">
    <property type="component" value="Chromosome 6"/>
</dbReference>
<dbReference type="Bgee" id="ENSRNOG00000011398">
    <property type="expression patterns" value="Expressed in pancreas and 19 other cell types or tissues"/>
</dbReference>
<dbReference type="GO" id="GO:0005634">
    <property type="term" value="C:nucleus"/>
    <property type="evidence" value="ECO:0000318"/>
    <property type="project" value="GO_Central"/>
</dbReference>
<dbReference type="GO" id="GO:0031515">
    <property type="term" value="C:tRNA (m1A) methyltransferase complex"/>
    <property type="evidence" value="ECO:0000266"/>
    <property type="project" value="RGD"/>
</dbReference>
<dbReference type="GO" id="GO:0061953">
    <property type="term" value="F:mRNA (adenine-N1-)-methyltransferase activity"/>
    <property type="evidence" value="ECO:0000250"/>
    <property type="project" value="UniProtKB"/>
</dbReference>
<dbReference type="GO" id="GO:0160107">
    <property type="term" value="F:tRNA (adenine(58)-N1)-methyltransferase activity"/>
    <property type="evidence" value="ECO:0007669"/>
    <property type="project" value="UniProtKB-EC"/>
</dbReference>
<dbReference type="GO" id="GO:0006397">
    <property type="term" value="P:mRNA processing"/>
    <property type="evidence" value="ECO:0000250"/>
    <property type="project" value="UniProtKB"/>
</dbReference>
<dbReference type="GO" id="GO:0030488">
    <property type="term" value="P:tRNA methylation"/>
    <property type="evidence" value="ECO:0000318"/>
    <property type="project" value="GO_Central"/>
</dbReference>
<dbReference type="FunFam" id="3.10.330.20:FF:000002">
    <property type="entry name" value="tRNA (adenine(58)-N(1))-methyltransferase catalytic subunit TRMT61A"/>
    <property type="match status" value="1"/>
</dbReference>
<dbReference type="FunFam" id="3.40.50.150:FF:000097">
    <property type="entry name" value="tRNA (adenine(58)-N(1))-methyltransferase catalytic subunit TRMT61A"/>
    <property type="match status" value="1"/>
</dbReference>
<dbReference type="Gene3D" id="3.10.330.20">
    <property type="match status" value="1"/>
</dbReference>
<dbReference type="Gene3D" id="3.40.50.150">
    <property type="entry name" value="Vaccinia Virus protein VP39"/>
    <property type="match status" value="1"/>
</dbReference>
<dbReference type="InterPro" id="IPR029063">
    <property type="entry name" value="SAM-dependent_MTases_sf"/>
</dbReference>
<dbReference type="InterPro" id="IPR049470">
    <property type="entry name" value="TRM61_C"/>
</dbReference>
<dbReference type="InterPro" id="IPR014816">
    <property type="entry name" value="tRNA_MeTrfase_Gcd14"/>
</dbReference>
<dbReference type="PANTHER" id="PTHR12133">
    <property type="entry name" value="TRNA (ADENINE(58)-N(1))-METHYLTRANSFERASE"/>
    <property type="match status" value="1"/>
</dbReference>
<dbReference type="PANTHER" id="PTHR12133:SF2">
    <property type="entry name" value="TRNA (ADENINE(58)-N(1))-METHYLTRANSFERASE CATALYTIC SUBUNIT TRMT61A"/>
    <property type="match status" value="1"/>
</dbReference>
<dbReference type="Pfam" id="PF08704">
    <property type="entry name" value="GCD14"/>
    <property type="match status" value="1"/>
</dbReference>
<dbReference type="PIRSF" id="PIRSF017269">
    <property type="entry name" value="GCD14"/>
    <property type="match status" value="1"/>
</dbReference>
<dbReference type="SUPFAM" id="SSF53335">
    <property type="entry name" value="S-adenosyl-L-methionine-dependent methyltransferases"/>
    <property type="match status" value="1"/>
</dbReference>
<dbReference type="PROSITE" id="PS51620">
    <property type="entry name" value="SAM_TRM61"/>
    <property type="match status" value="1"/>
</dbReference>
<name>TRM61_RAT</name>
<accession>Q6AY46</accession>
<organism>
    <name type="scientific">Rattus norvegicus</name>
    <name type="common">Rat</name>
    <dbReference type="NCBI Taxonomy" id="10116"/>
    <lineage>
        <taxon>Eukaryota</taxon>
        <taxon>Metazoa</taxon>
        <taxon>Chordata</taxon>
        <taxon>Craniata</taxon>
        <taxon>Vertebrata</taxon>
        <taxon>Euteleostomi</taxon>
        <taxon>Mammalia</taxon>
        <taxon>Eutheria</taxon>
        <taxon>Euarchontoglires</taxon>
        <taxon>Glires</taxon>
        <taxon>Rodentia</taxon>
        <taxon>Myomorpha</taxon>
        <taxon>Muroidea</taxon>
        <taxon>Muridae</taxon>
        <taxon>Murinae</taxon>
        <taxon>Rattus</taxon>
    </lineage>
</organism>
<proteinExistence type="evidence at transcript level"/>
<sequence length="290" mass="31619">MSFVAYEELIKEGDTAILSLGHGSMVAVRVQRGAQTQTRHGVLRHSVDLIGRPFGSKVTCSRGGWVYVLHPTPELWTVNLPHRTQILYSTDIALITMMLELRPGSVVCESGTGSGSVSHAIIRSIAPTGHLHTVEFHQQRADKAREEFQQHRVSQWVTVHTQDVCRSGFGVVHVADAVFLDIPSPWEAVGHAWDALKVEGGRFCSFSPCIEQVQRTCQALAAHGFTELSTLEVLPQVYNVRTVSLPLPDLGADDLEGNVGSDATPFRSGTPMKETVGHTGYLTFATKTPG</sequence>
<gene>
    <name type="primary">Trmt61a</name>
    <name type="synonym">Trm61</name>
</gene>